<evidence type="ECO:0000250" key="1"/>
<evidence type="ECO:0000250" key="2">
    <source>
        <dbReference type="UniProtKB" id="Q3TZW0"/>
    </source>
</evidence>
<evidence type="ECO:0000255" key="3"/>
<evidence type="ECO:0000256" key="4">
    <source>
        <dbReference type="SAM" id="MobiDB-lite"/>
    </source>
</evidence>
<evidence type="ECO:0000305" key="5"/>
<reference key="1">
    <citation type="submission" date="2006-01" db="EMBL/GenBank/DDBJ databases">
        <authorList>
            <consortium name="NIH - Mammalian Gene Collection (MGC) project"/>
        </authorList>
    </citation>
    <scope>NUCLEOTIDE SEQUENCE [LARGE SCALE MRNA]</scope>
    <source>
        <strain>Hereford</strain>
        <tissue>Testis</tissue>
    </source>
</reference>
<gene>
    <name type="primary">ECSCR</name>
    <name type="synonym">ECSM2</name>
</gene>
<comment type="function">
    <text evidence="1">Regulates endothelial chemotaxis and tube formation. Has a role in angiogenesis and apoptosis via modulation of the actin cytoskeleton and facilitation of proteasomal degradation of the apoptosis inhibitors BIRC3/IAP1 and BIRC2/IAP2 (By similarity).</text>
</comment>
<comment type="subunit">
    <text evidence="1">Interacts with FLNA. Interacts with the 20S proteasome subunit PSMA7.</text>
</comment>
<comment type="subcellular location">
    <subcellularLocation>
        <location evidence="1">Cell membrane</location>
        <topology evidence="5">Single-pass type I membrane protein</topology>
    </subcellularLocation>
    <subcellularLocation>
        <location evidence="1">Cytoplasm</location>
    </subcellularLocation>
</comment>
<comment type="PTM">
    <text evidence="1">May be heavily O-glycosylated.</text>
</comment>
<comment type="similarity">
    <text evidence="5">Belongs to the ECSCR family.</text>
</comment>
<sequence>MGSVRETQLRWAILGFLLLQAASETPSQFSTEAMTLSSSTVADHLPSSPGPTWSQSQKHTSGLSADVPSSGRSSDSMSGDTSHNVTSTSPNMSFRTTADSTVPPSPTSETVLTVAAFGVISFIAILVVVVIVLVSVVSLRFKCRKNKESEDPQKPGSSGLSESGSTANGEKESITLISMKNINMNNSKGCPSAEKVL</sequence>
<dbReference type="EMBL" id="BC112471">
    <property type="protein sequence ID" value="AAI12472.1"/>
    <property type="molecule type" value="mRNA"/>
</dbReference>
<dbReference type="RefSeq" id="NP_001039564.1">
    <property type="nucleotide sequence ID" value="NM_001046099.2"/>
</dbReference>
<dbReference type="RefSeq" id="NP_001231374.1">
    <property type="nucleotide sequence ID" value="NM_001244445.1"/>
</dbReference>
<dbReference type="RefSeq" id="NP_001231375.1">
    <property type="nucleotide sequence ID" value="NM_001244446.1"/>
</dbReference>
<dbReference type="SMR" id="Q2KIX5"/>
<dbReference type="FunCoup" id="Q2KIX5">
    <property type="interactions" value="178"/>
</dbReference>
<dbReference type="STRING" id="9913.ENSBTAP00000071037"/>
<dbReference type="PaxDb" id="9913-ENSBTAP00000040657"/>
<dbReference type="GeneID" id="511765"/>
<dbReference type="KEGG" id="bta:511765"/>
<dbReference type="CTD" id="641700"/>
<dbReference type="eggNOG" id="ENOG502S5MK">
    <property type="taxonomic scope" value="Eukaryota"/>
</dbReference>
<dbReference type="HOGENOM" id="CLU_101826_1_0_1"/>
<dbReference type="InParanoid" id="Q2KIX5"/>
<dbReference type="OrthoDB" id="8960225at2759"/>
<dbReference type="TreeFam" id="TF351823"/>
<dbReference type="Proteomes" id="UP000009136">
    <property type="component" value="Unplaced"/>
</dbReference>
<dbReference type="GO" id="GO:0005829">
    <property type="term" value="C:cytosol"/>
    <property type="evidence" value="ECO:0000318"/>
    <property type="project" value="GO_Central"/>
</dbReference>
<dbReference type="GO" id="GO:0005886">
    <property type="term" value="C:plasma membrane"/>
    <property type="evidence" value="ECO:0000318"/>
    <property type="project" value="GO_Central"/>
</dbReference>
<dbReference type="GO" id="GO:0001525">
    <property type="term" value="P:angiogenesis"/>
    <property type="evidence" value="ECO:0007669"/>
    <property type="project" value="UniProtKB-KW"/>
</dbReference>
<dbReference type="GO" id="GO:0006915">
    <property type="term" value="P:apoptotic process"/>
    <property type="evidence" value="ECO:0007669"/>
    <property type="project" value="UniProtKB-KW"/>
</dbReference>
<dbReference type="GO" id="GO:0030154">
    <property type="term" value="P:cell differentiation"/>
    <property type="evidence" value="ECO:0007669"/>
    <property type="project" value="UniProtKB-KW"/>
</dbReference>
<dbReference type="GO" id="GO:0006935">
    <property type="term" value="P:chemotaxis"/>
    <property type="evidence" value="ECO:0007669"/>
    <property type="project" value="UniProtKB-KW"/>
</dbReference>
<dbReference type="GO" id="GO:0016525">
    <property type="term" value="P:negative regulation of angiogenesis"/>
    <property type="evidence" value="ECO:0000318"/>
    <property type="project" value="GO_Central"/>
</dbReference>
<dbReference type="GO" id="GO:2000353">
    <property type="term" value="P:positive regulation of endothelial cell apoptotic process"/>
    <property type="evidence" value="ECO:0000318"/>
    <property type="project" value="GO_Central"/>
</dbReference>
<dbReference type="GO" id="GO:1901800">
    <property type="term" value="P:positive regulation of proteasomal protein catabolic process"/>
    <property type="evidence" value="ECO:0000318"/>
    <property type="project" value="GO_Central"/>
</dbReference>
<dbReference type="InterPro" id="IPR026247">
    <property type="entry name" value="ECSCR"/>
</dbReference>
<dbReference type="PANTHER" id="PTHR28602">
    <property type="entry name" value="ENDOTHELIAL CELL-SPECIFIC CHEMOTAXIS REGULATOR"/>
    <property type="match status" value="1"/>
</dbReference>
<dbReference type="PANTHER" id="PTHR28602:SF1">
    <property type="entry name" value="ENDOTHELIAL CELL-SPECIFIC CHEMOTAXIS REGULATOR"/>
    <property type="match status" value="1"/>
</dbReference>
<dbReference type="Pfam" id="PF15820">
    <property type="entry name" value="ECSCR"/>
    <property type="match status" value="1"/>
</dbReference>
<dbReference type="PRINTS" id="PR02069">
    <property type="entry name" value="ECCREGULATOR"/>
</dbReference>
<protein>
    <recommendedName>
        <fullName>Endothelial cell-specific chemotaxis regulator</fullName>
    </recommendedName>
    <alternativeName>
        <fullName>Endothelial cell-specific molecule 2</fullName>
    </alternativeName>
</protein>
<name>ECSCR_BOVIN</name>
<feature type="signal peptide" evidence="3">
    <location>
        <begin position="1"/>
        <end position="23"/>
    </location>
</feature>
<feature type="chain" id="PRO_0000365015" description="Endothelial cell-specific chemotaxis regulator">
    <location>
        <begin position="24"/>
        <end position="197"/>
    </location>
</feature>
<feature type="topological domain" description="Extracellular" evidence="3">
    <location>
        <begin position="24"/>
        <end position="113"/>
    </location>
</feature>
<feature type="transmembrane region" description="Helical" evidence="3">
    <location>
        <begin position="114"/>
        <end position="134"/>
    </location>
</feature>
<feature type="topological domain" description="Cytoplasmic" evidence="3">
    <location>
        <begin position="135"/>
        <end position="197"/>
    </location>
</feature>
<feature type="region of interest" description="Disordered" evidence="4">
    <location>
        <begin position="40"/>
        <end position="107"/>
    </location>
</feature>
<feature type="region of interest" description="Disordered" evidence="4">
    <location>
        <begin position="146"/>
        <end position="172"/>
    </location>
</feature>
<feature type="region of interest" description="Disordered" evidence="4">
    <location>
        <begin position="178"/>
        <end position="197"/>
    </location>
</feature>
<feature type="compositionally biased region" description="Polar residues" evidence="4">
    <location>
        <begin position="50"/>
        <end position="63"/>
    </location>
</feature>
<feature type="compositionally biased region" description="Low complexity" evidence="4">
    <location>
        <begin position="64"/>
        <end position="82"/>
    </location>
</feature>
<feature type="compositionally biased region" description="Polar residues" evidence="4">
    <location>
        <begin position="83"/>
        <end position="107"/>
    </location>
</feature>
<feature type="compositionally biased region" description="Polar residues" evidence="4">
    <location>
        <begin position="155"/>
        <end position="168"/>
    </location>
</feature>
<feature type="compositionally biased region" description="Polar residues" evidence="4">
    <location>
        <begin position="178"/>
        <end position="189"/>
    </location>
</feature>
<feature type="modified residue" description="Phosphoserine" evidence="2">
    <location>
        <position position="187"/>
    </location>
</feature>
<keyword id="KW-0037">Angiogenesis</keyword>
<keyword id="KW-0053">Apoptosis</keyword>
<keyword id="KW-1003">Cell membrane</keyword>
<keyword id="KW-0145">Chemotaxis</keyword>
<keyword id="KW-0963">Cytoplasm</keyword>
<keyword id="KW-0217">Developmental protein</keyword>
<keyword id="KW-0221">Differentiation</keyword>
<keyword id="KW-0325">Glycoprotein</keyword>
<keyword id="KW-0472">Membrane</keyword>
<keyword id="KW-0597">Phosphoprotein</keyword>
<keyword id="KW-1185">Reference proteome</keyword>
<keyword id="KW-0732">Signal</keyword>
<keyword id="KW-0812">Transmembrane</keyword>
<keyword id="KW-1133">Transmembrane helix</keyword>
<proteinExistence type="evidence at transcript level"/>
<accession>Q2KIX5</accession>
<organism>
    <name type="scientific">Bos taurus</name>
    <name type="common">Bovine</name>
    <dbReference type="NCBI Taxonomy" id="9913"/>
    <lineage>
        <taxon>Eukaryota</taxon>
        <taxon>Metazoa</taxon>
        <taxon>Chordata</taxon>
        <taxon>Craniata</taxon>
        <taxon>Vertebrata</taxon>
        <taxon>Euteleostomi</taxon>
        <taxon>Mammalia</taxon>
        <taxon>Eutheria</taxon>
        <taxon>Laurasiatheria</taxon>
        <taxon>Artiodactyla</taxon>
        <taxon>Ruminantia</taxon>
        <taxon>Pecora</taxon>
        <taxon>Bovidae</taxon>
        <taxon>Bovinae</taxon>
        <taxon>Bos</taxon>
    </lineage>
</organism>